<gene>
    <name evidence="1" type="primary">lolD</name>
    <name type="ordered locus">FTT_0405</name>
</gene>
<dbReference type="EC" id="7.6.2.-" evidence="1"/>
<dbReference type="EMBL" id="AJ749949">
    <property type="protein sequence ID" value="CAG45038.1"/>
    <property type="molecule type" value="Genomic_DNA"/>
</dbReference>
<dbReference type="RefSeq" id="WP_003017997.1">
    <property type="nucleotide sequence ID" value="NZ_CP010290.1"/>
</dbReference>
<dbReference type="RefSeq" id="YP_169450.1">
    <property type="nucleotide sequence ID" value="NC_006570.2"/>
</dbReference>
<dbReference type="SMR" id="Q5NHP2"/>
<dbReference type="STRING" id="177416.FTT_0405"/>
<dbReference type="DNASU" id="3192199"/>
<dbReference type="EnsemblBacteria" id="CAG45038">
    <property type="protein sequence ID" value="CAG45038"/>
    <property type="gene ID" value="FTT_0405"/>
</dbReference>
<dbReference type="KEGG" id="ftu:FTT_0405"/>
<dbReference type="eggNOG" id="COG1136">
    <property type="taxonomic scope" value="Bacteria"/>
</dbReference>
<dbReference type="OrthoDB" id="9801477at2"/>
<dbReference type="Proteomes" id="UP000001174">
    <property type="component" value="Chromosome"/>
</dbReference>
<dbReference type="GO" id="GO:0005886">
    <property type="term" value="C:plasma membrane"/>
    <property type="evidence" value="ECO:0007669"/>
    <property type="project" value="UniProtKB-SubCell"/>
</dbReference>
<dbReference type="GO" id="GO:0005524">
    <property type="term" value="F:ATP binding"/>
    <property type="evidence" value="ECO:0007669"/>
    <property type="project" value="UniProtKB-KW"/>
</dbReference>
<dbReference type="GO" id="GO:0016887">
    <property type="term" value="F:ATP hydrolysis activity"/>
    <property type="evidence" value="ECO:0007669"/>
    <property type="project" value="InterPro"/>
</dbReference>
<dbReference type="GO" id="GO:0022857">
    <property type="term" value="F:transmembrane transporter activity"/>
    <property type="evidence" value="ECO:0007669"/>
    <property type="project" value="TreeGrafter"/>
</dbReference>
<dbReference type="GO" id="GO:0044874">
    <property type="term" value="P:lipoprotein localization to outer membrane"/>
    <property type="evidence" value="ECO:0007669"/>
    <property type="project" value="TreeGrafter"/>
</dbReference>
<dbReference type="GO" id="GO:0089705">
    <property type="term" value="P:protein localization to outer membrane"/>
    <property type="evidence" value="ECO:0007669"/>
    <property type="project" value="TreeGrafter"/>
</dbReference>
<dbReference type="CDD" id="cd03255">
    <property type="entry name" value="ABC_MJ0796_LolCDE_FtsE"/>
    <property type="match status" value="1"/>
</dbReference>
<dbReference type="FunFam" id="3.40.50.300:FF:000230">
    <property type="entry name" value="Lipoprotein-releasing system ATP-binding protein LolD"/>
    <property type="match status" value="1"/>
</dbReference>
<dbReference type="Gene3D" id="3.40.50.300">
    <property type="entry name" value="P-loop containing nucleotide triphosphate hydrolases"/>
    <property type="match status" value="1"/>
</dbReference>
<dbReference type="InterPro" id="IPR003593">
    <property type="entry name" value="AAA+_ATPase"/>
</dbReference>
<dbReference type="InterPro" id="IPR003439">
    <property type="entry name" value="ABC_transporter-like_ATP-bd"/>
</dbReference>
<dbReference type="InterPro" id="IPR017871">
    <property type="entry name" value="ABC_transporter-like_CS"/>
</dbReference>
<dbReference type="InterPro" id="IPR015854">
    <property type="entry name" value="ABC_transpr_LolD-like"/>
</dbReference>
<dbReference type="InterPro" id="IPR011924">
    <property type="entry name" value="LolD_lipo_ATP-bd"/>
</dbReference>
<dbReference type="InterPro" id="IPR017911">
    <property type="entry name" value="MacB-like_ATP-bd"/>
</dbReference>
<dbReference type="InterPro" id="IPR027417">
    <property type="entry name" value="P-loop_NTPase"/>
</dbReference>
<dbReference type="NCBIfam" id="TIGR02211">
    <property type="entry name" value="LolD_lipo_ex"/>
    <property type="match status" value="1"/>
</dbReference>
<dbReference type="PANTHER" id="PTHR24220">
    <property type="entry name" value="IMPORT ATP-BINDING PROTEIN"/>
    <property type="match status" value="1"/>
</dbReference>
<dbReference type="PANTHER" id="PTHR24220:SF689">
    <property type="entry name" value="LIPOPROTEIN-RELEASING SYSTEM ATP-BINDING PROTEIN LOLD"/>
    <property type="match status" value="1"/>
</dbReference>
<dbReference type="Pfam" id="PF00005">
    <property type="entry name" value="ABC_tran"/>
    <property type="match status" value="1"/>
</dbReference>
<dbReference type="SMART" id="SM00382">
    <property type="entry name" value="AAA"/>
    <property type="match status" value="1"/>
</dbReference>
<dbReference type="SUPFAM" id="SSF52540">
    <property type="entry name" value="P-loop containing nucleoside triphosphate hydrolases"/>
    <property type="match status" value="1"/>
</dbReference>
<dbReference type="PROSITE" id="PS00211">
    <property type="entry name" value="ABC_TRANSPORTER_1"/>
    <property type="match status" value="1"/>
</dbReference>
<dbReference type="PROSITE" id="PS50893">
    <property type="entry name" value="ABC_TRANSPORTER_2"/>
    <property type="match status" value="1"/>
</dbReference>
<dbReference type="PROSITE" id="PS51244">
    <property type="entry name" value="LOLD"/>
    <property type="match status" value="1"/>
</dbReference>
<organism>
    <name type="scientific">Francisella tularensis subsp. tularensis (strain SCHU S4 / Schu 4)</name>
    <dbReference type="NCBI Taxonomy" id="177416"/>
    <lineage>
        <taxon>Bacteria</taxon>
        <taxon>Pseudomonadati</taxon>
        <taxon>Pseudomonadota</taxon>
        <taxon>Gammaproteobacteria</taxon>
        <taxon>Thiotrichales</taxon>
        <taxon>Francisellaceae</taxon>
        <taxon>Francisella</taxon>
    </lineage>
</organism>
<comment type="function">
    <text evidence="1">Part of the ABC transporter complex LolCDE involved in the translocation of mature outer membrane-directed lipoproteins, from the inner membrane to the periplasmic chaperone, LolA. Responsible for the formation of the LolA-lipoprotein complex in an ATP-dependent manner.</text>
</comment>
<comment type="subunit">
    <text evidence="1">The complex is composed of two ATP-binding proteins (LolD) and two transmembrane proteins (LolC and LolE).</text>
</comment>
<comment type="subcellular location">
    <subcellularLocation>
        <location evidence="1">Cell inner membrane</location>
        <topology evidence="1">Peripheral membrane protein</topology>
    </subcellularLocation>
</comment>
<comment type="similarity">
    <text evidence="1">Belongs to the ABC transporter superfamily. Lipoprotein translocase (TC 3.A.1.125) family.</text>
</comment>
<feature type="chain" id="PRO_0000272087" description="Lipoprotein-releasing system ATP-binding protein LolD">
    <location>
        <begin position="1"/>
        <end position="231"/>
    </location>
</feature>
<feature type="domain" description="ABC transporter" evidence="1">
    <location>
        <begin position="6"/>
        <end position="230"/>
    </location>
</feature>
<feature type="binding site" evidence="1">
    <location>
        <begin position="42"/>
        <end position="49"/>
    </location>
    <ligand>
        <name>ATP</name>
        <dbReference type="ChEBI" id="CHEBI:30616"/>
    </ligand>
</feature>
<sequence length="231" mass="25727">MNDVVLSCKNVSKKYTEFKTDIAILKDVNLEIKKGEKVAILGLSGSGKTTLLNVLGGLDKCSAGEVYLMGERFDNQSVNKRAKMRNKHLGFIYQLHHLLPEFTAIENVMIPLAITKKYTKKESIKLANEILKKVGLDHRADHKPAELSGGERQRVAIARALVTNPNCILADEPTGNLDSQRSESIFALMQQLSDDFGTSFVIVTHDEKLASRMNKIYRLVDGELELVINSN</sequence>
<keyword id="KW-0067">ATP-binding</keyword>
<keyword id="KW-0997">Cell inner membrane</keyword>
<keyword id="KW-1003">Cell membrane</keyword>
<keyword id="KW-0472">Membrane</keyword>
<keyword id="KW-0547">Nucleotide-binding</keyword>
<keyword id="KW-1185">Reference proteome</keyword>
<keyword id="KW-1278">Translocase</keyword>
<keyword id="KW-0813">Transport</keyword>
<reference key="1">
    <citation type="journal article" date="2005" name="Nat. Genet.">
        <title>The complete genome sequence of Francisella tularensis, the causative agent of tularemia.</title>
        <authorList>
            <person name="Larsson P."/>
            <person name="Oyston P.C.F."/>
            <person name="Chain P."/>
            <person name="Chu M.C."/>
            <person name="Duffield M."/>
            <person name="Fuxelius H.-H."/>
            <person name="Garcia E."/>
            <person name="Haelltorp G."/>
            <person name="Johansson D."/>
            <person name="Isherwood K.E."/>
            <person name="Karp P.D."/>
            <person name="Larsson E."/>
            <person name="Liu Y."/>
            <person name="Michell S."/>
            <person name="Prior J."/>
            <person name="Prior R."/>
            <person name="Malfatti S."/>
            <person name="Sjoestedt A."/>
            <person name="Svensson K."/>
            <person name="Thompson N."/>
            <person name="Vergez L."/>
            <person name="Wagg J.K."/>
            <person name="Wren B.W."/>
            <person name="Lindler L.E."/>
            <person name="Andersson S.G.E."/>
            <person name="Forsman M."/>
            <person name="Titball R.W."/>
        </authorList>
    </citation>
    <scope>NUCLEOTIDE SEQUENCE [LARGE SCALE GENOMIC DNA]</scope>
    <source>
        <strain>SCHU S4 / Schu 4</strain>
    </source>
</reference>
<protein>
    <recommendedName>
        <fullName evidence="1">Lipoprotein-releasing system ATP-binding protein LolD</fullName>
        <ecNumber evidence="1">7.6.2.-</ecNumber>
    </recommendedName>
</protein>
<proteinExistence type="inferred from homology"/>
<evidence type="ECO:0000255" key="1">
    <source>
        <dbReference type="HAMAP-Rule" id="MF_01708"/>
    </source>
</evidence>
<accession>Q5NHP2</accession>
<name>LOLD_FRATT</name>